<evidence type="ECO:0000255" key="1">
    <source>
        <dbReference type="HAMAP-Rule" id="MF_00038"/>
    </source>
</evidence>
<dbReference type="EC" id="2.7.8.13" evidence="1"/>
<dbReference type="EMBL" id="CP000749">
    <property type="protein sequence ID" value="ABR71530.1"/>
    <property type="molecule type" value="Genomic_DNA"/>
</dbReference>
<dbReference type="SMR" id="A6VYK1"/>
<dbReference type="STRING" id="400668.Mmwyl1_2617"/>
<dbReference type="KEGG" id="mmw:Mmwyl1_2617"/>
<dbReference type="eggNOG" id="COG0472">
    <property type="taxonomic scope" value="Bacteria"/>
</dbReference>
<dbReference type="HOGENOM" id="CLU_023982_0_0_6"/>
<dbReference type="OrthoDB" id="9805475at2"/>
<dbReference type="UniPathway" id="UPA00219"/>
<dbReference type="GO" id="GO:0005886">
    <property type="term" value="C:plasma membrane"/>
    <property type="evidence" value="ECO:0007669"/>
    <property type="project" value="UniProtKB-SubCell"/>
</dbReference>
<dbReference type="GO" id="GO:0046872">
    <property type="term" value="F:metal ion binding"/>
    <property type="evidence" value="ECO:0007669"/>
    <property type="project" value="UniProtKB-KW"/>
</dbReference>
<dbReference type="GO" id="GO:0008963">
    <property type="term" value="F:phospho-N-acetylmuramoyl-pentapeptide-transferase activity"/>
    <property type="evidence" value="ECO:0007669"/>
    <property type="project" value="UniProtKB-UniRule"/>
</dbReference>
<dbReference type="GO" id="GO:0051992">
    <property type="term" value="F:UDP-N-acetylmuramoyl-L-alanyl-D-glutamyl-meso-2,6-diaminopimelyl-D-alanyl-D-alanine:undecaprenyl-phosphate transferase activity"/>
    <property type="evidence" value="ECO:0007669"/>
    <property type="project" value="RHEA"/>
</dbReference>
<dbReference type="GO" id="GO:0051301">
    <property type="term" value="P:cell division"/>
    <property type="evidence" value="ECO:0007669"/>
    <property type="project" value="UniProtKB-KW"/>
</dbReference>
<dbReference type="GO" id="GO:0071555">
    <property type="term" value="P:cell wall organization"/>
    <property type="evidence" value="ECO:0007669"/>
    <property type="project" value="UniProtKB-KW"/>
</dbReference>
<dbReference type="GO" id="GO:0009252">
    <property type="term" value="P:peptidoglycan biosynthetic process"/>
    <property type="evidence" value="ECO:0007669"/>
    <property type="project" value="UniProtKB-UniRule"/>
</dbReference>
<dbReference type="GO" id="GO:0008360">
    <property type="term" value="P:regulation of cell shape"/>
    <property type="evidence" value="ECO:0007669"/>
    <property type="project" value="UniProtKB-KW"/>
</dbReference>
<dbReference type="CDD" id="cd06852">
    <property type="entry name" value="GT_MraY"/>
    <property type="match status" value="1"/>
</dbReference>
<dbReference type="HAMAP" id="MF_00038">
    <property type="entry name" value="MraY"/>
    <property type="match status" value="1"/>
</dbReference>
<dbReference type="InterPro" id="IPR000715">
    <property type="entry name" value="Glycosyl_transferase_4"/>
</dbReference>
<dbReference type="InterPro" id="IPR003524">
    <property type="entry name" value="PNAcMuramoyl-5peptid_Trfase"/>
</dbReference>
<dbReference type="InterPro" id="IPR018480">
    <property type="entry name" value="PNAcMuramoyl-5peptid_Trfase_CS"/>
</dbReference>
<dbReference type="NCBIfam" id="TIGR00445">
    <property type="entry name" value="mraY"/>
    <property type="match status" value="1"/>
</dbReference>
<dbReference type="PANTHER" id="PTHR22926">
    <property type="entry name" value="PHOSPHO-N-ACETYLMURAMOYL-PENTAPEPTIDE-TRANSFERASE"/>
    <property type="match status" value="1"/>
</dbReference>
<dbReference type="PANTHER" id="PTHR22926:SF5">
    <property type="entry name" value="PHOSPHO-N-ACETYLMURAMOYL-PENTAPEPTIDE-TRANSFERASE HOMOLOG"/>
    <property type="match status" value="1"/>
</dbReference>
<dbReference type="Pfam" id="PF00953">
    <property type="entry name" value="Glycos_transf_4"/>
    <property type="match status" value="1"/>
</dbReference>
<dbReference type="Pfam" id="PF10555">
    <property type="entry name" value="MraY_sig1"/>
    <property type="match status" value="1"/>
</dbReference>
<dbReference type="PROSITE" id="PS01347">
    <property type="entry name" value="MRAY_1"/>
    <property type="match status" value="1"/>
</dbReference>
<dbReference type="PROSITE" id="PS01348">
    <property type="entry name" value="MRAY_2"/>
    <property type="match status" value="1"/>
</dbReference>
<accession>A6VYK1</accession>
<gene>
    <name evidence="1" type="primary">mraY</name>
    <name type="ordered locus">Mmwyl1_2617</name>
</gene>
<comment type="function">
    <text evidence="1">Catalyzes the initial step of the lipid cycle reactions in the biosynthesis of the cell wall peptidoglycan: transfers peptidoglycan precursor phospho-MurNAc-pentapeptide from UDP-MurNAc-pentapeptide onto the lipid carrier undecaprenyl phosphate, yielding undecaprenyl-pyrophosphoryl-MurNAc-pentapeptide, known as lipid I.</text>
</comment>
<comment type="catalytic activity">
    <reaction evidence="1">
        <text>UDP-N-acetyl-alpha-D-muramoyl-L-alanyl-gamma-D-glutamyl-meso-2,6-diaminopimeloyl-D-alanyl-D-alanine + di-trans,octa-cis-undecaprenyl phosphate = di-trans,octa-cis-undecaprenyl diphospho-N-acetyl-alpha-D-muramoyl-L-alanyl-D-glutamyl-meso-2,6-diaminopimeloyl-D-alanyl-D-alanine + UMP</text>
        <dbReference type="Rhea" id="RHEA:28386"/>
        <dbReference type="ChEBI" id="CHEBI:57865"/>
        <dbReference type="ChEBI" id="CHEBI:60392"/>
        <dbReference type="ChEBI" id="CHEBI:61386"/>
        <dbReference type="ChEBI" id="CHEBI:61387"/>
        <dbReference type="EC" id="2.7.8.13"/>
    </reaction>
</comment>
<comment type="cofactor">
    <cofactor evidence="1">
        <name>Mg(2+)</name>
        <dbReference type="ChEBI" id="CHEBI:18420"/>
    </cofactor>
</comment>
<comment type="pathway">
    <text evidence="1">Cell wall biogenesis; peptidoglycan biosynthesis.</text>
</comment>
<comment type="subcellular location">
    <subcellularLocation>
        <location evidence="1">Cell inner membrane</location>
        <topology evidence="1">Multi-pass membrane protein</topology>
    </subcellularLocation>
</comment>
<comment type="similarity">
    <text evidence="1">Belongs to the glycosyltransferase 4 family. MraY subfamily.</text>
</comment>
<organism>
    <name type="scientific">Marinomonas sp. (strain MWYL1)</name>
    <dbReference type="NCBI Taxonomy" id="400668"/>
    <lineage>
        <taxon>Bacteria</taxon>
        <taxon>Pseudomonadati</taxon>
        <taxon>Pseudomonadota</taxon>
        <taxon>Gammaproteobacteria</taxon>
        <taxon>Oceanospirillales</taxon>
        <taxon>Oceanospirillaceae</taxon>
        <taxon>Marinomonas</taxon>
    </lineage>
</organism>
<sequence length="360" mass="39480">MLLLLTAYLSKYHTFFTVFNYLSLRAILGVLTALAISLLVGNKVIVLLQRLQIGQAVRSDGPQTHLSKAGTPTMGGALIIFSISVSTLLWGDLRNQYVWVVLLVMLAFGVVGWVDDYRKVVEKNPRGLPGRWKYFWQSVFGLAAAFYLYYTASTPAETALIVPLFKDVAIPLGMFFIVLTYFVIVGTSNAVNLTDGLDGLAILPTVLVGGALGVFAYLTGNIRFADYLLIPYVHGSGELLVFCAALAGAGLGFLWFNTYPAQIFMGDVGSLALGAALGTIAVIVRQELVLFIMGGVFVMETVSVILQVASYKLTKRRIFRMAPIHHHFELKGWAEPKVIVRFWIITVCLVLVGFATLKVR</sequence>
<reference key="1">
    <citation type="submission" date="2007-06" db="EMBL/GenBank/DDBJ databases">
        <title>Complete sequence of Marinomonas sp. MWYL1.</title>
        <authorList>
            <consortium name="US DOE Joint Genome Institute"/>
            <person name="Copeland A."/>
            <person name="Lucas S."/>
            <person name="Lapidus A."/>
            <person name="Barry K."/>
            <person name="Glavina del Rio T."/>
            <person name="Dalin E."/>
            <person name="Tice H."/>
            <person name="Pitluck S."/>
            <person name="Kiss H."/>
            <person name="Brettin T."/>
            <person name="Bruce D."/>
            <person name="Detter J.C."/>
            <person name="Han C."/>
            <person name="Schmutz J."/>
            <person name="Larimer F."/>
            <person name="Land M."/>
            <person name="Hauser L."/>
            <person name="Kyrpides N."/>
            <person name="Kim E."/>
            <person name="Johnston A.W.B."/>
            <person name="Todd J.D."/>
            <person name="Rogers R."/>
            <person name="Wexler M."/>
            <person name="Bond P.L."/>
            <person name="Li Y."/>
            <person name="Richardson P."/>
        </authorList>
    </citation>
    <scope>NUCLEOTIDE SEQUENCE [LARGE SCALE GENOMIC DNA]</scope>
    <source>
        <strain>MWYL1</strain>
    </source>
</reference>
<keyword id="KW-0131">Cell cycle</keyword>
<keyword id="KW-0132">Cell division</keyword>
<keyword id="KW-0997">Cell inner membrane</keyword>
<keyword id="KW-1003">Cell membrane</keyword>
<keyword id="KW-0133">Cell shape</keyword>
<keyword id="KW-0961">Cell wall biogenesis/degradation</keyword>
<keyword id="KW-0460">Magnesium</keyword>
<keyword id="KW-0472">Membrane</keyword>
<keyword id="KW-0479">Metal-binding</keyword>
<keyword id="KW-0573">Peptidoglycan synthesis</keyword>
<keyword id="KW-0808">Transferase</keyword>
<keyword id="KW-0812">Transmembrane</keyword>
<keyword id="KW-1133">Transmembrane helix</keyword>
<protein>
    <recommendedName>
        <fullName evidence="1">Phospho-N-acetylmuramoyl-pentapeptide-transferase</fullName>
        <ecNumber evidence="1">2.7.8.13</ecNumber>
    </recommendedName>
    <alternativeName>
        <fullName evidence="1">UDP-MurNAc-pentapeptide phosphotransferase</fullName>
    </alternativeName>
</protein>
<name>MRAY_MARMS</name>
<proteinExistence type="inferred from homology"/>
<feature type="chain" id="PRO_1000074547" description="Phospho-N-acetylmuramoyl-pentapeptide-transferase">
    <location>
        <begin position="1"/>
        <end position="360"/>
    </location>
</feature>
<feature type="transmembrane region" description="Helical" evidence="1">
    <location>
        <begin position="27"/>
        <end position="47"/>
    </location>
</feature>
<feature type="transmembrane region" description="Helical" evidence="1">
    <location>
        <begin position="73"/>
        <end position="93"/>
    </location>
</feature>
<feature type="transmembrane region" description="Helical" evidence="1">
    <location>
        <begin position="97"/>
        <end position="117"/>
    </location>
</feature>
<feature type="transmembrane region" description="Helical" evidence="1">
    <location>
        <begin position="145"/>
        <end position="165"/>
    </location>
</feature>
<feature type="transmembrane region" description="Helical" evidence="1">
    <location>
        <begin position="168"/>
        <end position="188"/>
    </location>
</feature>
<feature type="transmembrane region" description="Helical" evidence="1">
    <location>
        <begin position="199"/>
        <end position="219"/>
    </location>
</feature>
<feature type="transmembrane region" description="Helical" evidence="1">
    <location>
        <begin position="236"/>
        <end position="256"/>
    </location>
</feature>
<feature type="transmembrane region" description="Helical" evidence="1">
    <location>
        <begin position="263"/>
        <end position="283"/>
    </location>
</feature>
<feature type="transmembrane region" description="Helical" evidence="1">
    <location>
        <begin position="288"/>
        <end position="308"/>
    </location>
</feature>
<feature type="transmembrane region" description="Helical" evidence="1">
    <location>
        <begin position="337"/>
        <end position="357"/>
    </location>
</feature>